<reference key="1">
    <citation type="journal article" date="2005" name="Science">
        <title>The transcriptional landscape of the mammalian genome.</title>
        <authorList>
            <person name="Carninci P."/>
            <person name="Kasukawa T."/>
            <person name="Katayama S."/>
            <person name="Gough J."/>
            <person name="Frith M.C."/>
            <person name="Maeda N."/>
            <person name="Oyama R."/>
            <person name="Ravasi T."/>
            <person name="Lenhard B."/>
            <person name="Wells C."/>
            <person name="Kodzius R."/>
            <person name="Shimokawa K."/>
            <person name="Bajic V.B."/>
            <person name="Brenner S.E."/>
            <person name="Batalov S."/>
            <person name="Forrest A.R."/>
            <person name="Zavolan M."/>
            <person name="Davis M.J."/>
            <person name="Wilming L.G."/>
            <person name="Aidinis V."/>
            <person name="Allen J.E."/>
            <person name="Ambesi-Impiombato A."/>
            <person name="Apweiler R."/>
            <person name="Aturaliya R.N."/>
            <person name="Bailey T.L."/>
            <person name="Bansal M."/>
            <person name="Baxter L."/>
            <person name="Beisel K.W."/>
            <person name="Bersano T."/>
            <person name="Bono H."/>
            <person name="Chalk A.M."/>
            <person name="Chiu K.P."/>
            <person name="Choudhary V."/>
            <person name="Christoffels A."/>
            <person name="Clutterbuck D.R."/>
            <person name="Crowe M.L."/>
            <person name="Dalla E."/>
            <person name="Dalrymple B.P."/>
            <person name="de Bono B."/>
            <person name="Della Gatta G."/>
            <person name="di Bernardo D."/>
            <person name="Down T."/>
            <person name="Engstrom P."/>
            <person name="Fagiolini M."/>
            <person name="Faulkner G."/>
            <person name="Fletcher C.F."/>
            <person name="Fukushima T."/>
            <person name="Furuno M."/>
            <person name="Futaki S."/>
            <person name="Gariboldi M."/>
            <person name="Georgii-Hemming P."/>
            <person name="Gingeras T.R."/>
            <person name="Gojobori T."/>
            <person name="Green R.E."/>
            <person name="Gustincich S."/>
            <person name="Harbers M."/>
            <person name="Hayashi Y."/>
            <person name="Hensch T.K."/>
            <person name="Hirokawa N."/>
            <person name="Hill D."/>
            <person name="Huminiecki L."/>
            <person name="Iacono M."/>
            <person name="Ikeo K."/>
            <person name="Iwama A."/>
            <person name="Ishikawa T."/>
            <person name="Jakt M."/>
            <person name="Kanapin A."/>
            <person name="Katoh M."/>
            <person name="Kawasawa Y."/>
            <person name="Kelso J."/>
            <person name="Kitamura H."/>
            <person name="Kitano H."/>
            <person name="Kollias G."/>
            <person name="Krishnan S.P."/>
            <person name="Kruger A."/>
            <person name="Kummerfeld S.K."/>
            <person name="Kurochkin I.V."/>
            <person name="Lareau L.F."/>
            <person name="Lazarevic D."/>
            <person name="Lipovich L."/>
            <person name="Liu J."/>
            <person name="Liuni S."/>
            <person name="McWilliam S."/>
            <person name="Madan Babu M."/>
            <person name="Madera M."/>
            <person name="Marchionni L."/>
            <person name="Matsuda H."/>
            <person name="Matsuzawa S."/>
            <person name="Miki H."/>
            <person name="Mignone F."/>
            <person name="Miyake S."/>
            <person name="Morris K."/>
            <person name="Mottagui-Tabar S."/>
            <person name="Mulder N."/>
            <person name="Nakano N."/>
            <person name="Nakauchi H."/>
            <person name="Ng P."/>
            <person name="Nilsson R."/>
            <person name="Nishiguchi S."/>
            <person name="Nishikawa S."/>
            <person name="Nori F."/>
            <person name="Ohara O."/>
            <person name="Okazaki Y."/>
            <person name="Orlando V."/>
            <person name="Pang K.C."/>
            <person name="Pavan W.J."/>
            <person name="Pavesi G."/>
            <person name="Pesole G."/>
            <person name="Petrovsky N."/>
            <person name="Piazza S."/>
            <person name="Reed J."/>
            <person name="Reid J.F."/>
            <person name="Ring B.Z."/>
            <person name="Ringwald M."/>
            <person name="Rost B."/>
            <person name="Ruan Y."/>
            <person name="Salzberg S.L."/>
            <person name="Sandelin A."/>
            <person name="Schneider C."/>
            <person name="Schoenbach C."/>
            <person name="Sekiguchi K."/>
            <person name="Semple C.A."/>
            <person name="Seno S."/>
            <person name="Sessa L."/>
            <person name="Sheng Y."/>
            <person name="Shibata Y."/>
            <person name="Shimada H."/>
            <person name="Shimada K."/>
            <person name="Silva D."/>
            <person name="Sinclair B."/>
            <person name="Sperling S."/>
            <person name="Stupka E."/>
            <person name="Sugiura K."/>
            <person name="Sultana R."/>
            <person name="Takenaka Y."/>
            <person name="Taki K."/>
            <person name="Tammoja K."/>
            <person name="Tan S.L."/>
            <person name="Tang S."/>
            <person name="Taylor M.S."/>
            <person name="Tegner J."/>
            <person name="Teichmann S.A."/>
            <person name="Ueda H.R."/>
            <person name="van Nimwegen E."/>
            <person name="Verardo R."/>
            <person name="Wei C.L."/>
            <person name="Yagi K."/>
            <person name="Yamanishi H."/>
            <person name="Zabarovsky E."/>
            <person name="Zhu S."/>
            <person name="Zimmer A."/>
            <person name="Hide W."/>
            <person name="Bult C."/>
            <person name="Grimmond S.M."/>
            <person name="Teasdale R.D."/>
            <person name="Liu E.T."/>
            <person name="Brusic V."/>
            <person name="Quackenbush J."/>
            <person name="Wahlestedt C."/>
            <person name="Mattick J.S."/>
            <person name="Hume D.A."/>
            <person name="Kai C."/>
            <person name="Sasaki D."/>
            <person name="Tomaru Y."/>
            <person name="Fukuda S."/>
            <person name="Kanamori-Katayama M."/>
            <person name="Suzuki M."/>
            <person name="Aoki J."/>
            <person name="Arakawa T."/>
            <person name="Iida J."/>
            <person name="Imamura K."/>
            <person name="Itoh M."/>
            <person name="Kato T."/>
            <person name="Kawaji H."/>
            <person name="Kawagashira N."/>
            <person name="Kawashima T."/>
            <person name="Kojima M."/>
            <person name="Kondo S."/>
            <person name="Konno H."/>
            <person name="Nakano K."/>
            <person name="Ninomiya N."/>
            <person name="Nishio T."/>
            <person name="Okada M."/>
            <person name="Plessy C."/>
            <person name="Shibata K."/>
            <person name="Shiraki T."/>
            <person name="Suzuki S."/>
            <person name="Tagami M."/>
            <person name="Waki K."/>
            <person name="Watahiki A."/>
            <person name="Okamura-Oho Y."/>
            <person name="Suzuki H."/>
            <person name="Kawai J."/>
            <person name="Hayashizaki Y."/>
        </authorList>
    </citation>
    <scope>NUCLEOTIDE SEQUENCE [LARGE SCALE MRNA]</scope>
    <source>
        <strain>C57BL/6J</strain>
        <tissue>Liver</tissue>
        <tissue>Small intestine</tissue>
    </source>
</reference>
<reference key="2">
    <citation type="journal article" date="2004" name="Genome Res.">
        <title>The status, quality, and expansion of the NIH full-length cDNA project: the Mammalian Gene Collection (MGC).</title>
        <authorList>
            <consortium name="The MGC Project Team"/>
        </authorList>
    </citation>
    <scope>NUCLEOTIDE SEQUENCE [LARGE SCALE MRNA]</scope>
    <source>
        <strain>C57BL/6J</strain>
        <tissue>Brain</tissue>
    </source>
</reference>
<reference key="3">
    <citation type="journal article" date="2010" name="Cell. Mol. Life Sci.">
        <title>Cell-specific and lamin-dependent targeting of novel transmembrane proteins in the nuclear envelope.</title>
        <authorList>
            <person name="Malik P."/>
            <person name="Korfali N."/>
            <person name="Srsen V."/>
            <person name="Lazou V."/>
            <person name="Batrakou D.G."/>
            <person name="Zuleger N."/>
            <person name="Kavanagh D.M."/>
            <person name="Wilkie G.S."/>
            <person name="Goldberg M.W."/>
            <person name="Schirmer E.C."/>
        </authorList>
    </citation>
    <scope>SUBCELLULAR LOCATION</scope>
</reference>
<reference key="4">
    <citation type="journal article" date="2015" name="PLoS ONE">
        <title>TMEM120A and B: nuclear envelope transmembrane proteins important for adipocyte differentiation.</title>
        <authorList>
            <person name="Batrakou D.G."/>
            <person name="de Las Heras J.I."/>
            <person name="Czapiewski R."/>
            <person name="Mouras R."/>
            <person name="Schirmer E.C."/>
        </authorList>
    </citation>
    <scope>FUNCTION</scope>
    <scope>INDUCTION</scope>
    <scope>TISSUE SPECIFICITY</scope>
    <scope>SUBUNIT</scope>
</reference>
<reference key="5">
    <citation type="journal article" date="2020" name="Cell">
        <title>TACAN is an ion channel involved in sensing mechanical pain.</title>
        <authorList>
            <person name="Beaulieu-Laroche L."/>
            <person name="Christin M."/>
            <person name="Donoghue A."/>
            <person name="Agosti F."/>
            <person name="Yousefpour N."/>
            <person name="Petitjean H."/>
            <person name="Davidova A."/>
            <person name="Stanton C."/>
            <person name="Khan U."/>
            <person name="Dietz C."/>
            <person name="Faure E."/>
            <person name="Fatima T."/>
            <person name="MacPherson A."/>
            <person name="Mouchbahani-Constance S."/>
            <person name="Bisson D.G."/>
            <person name="Haglund L."/>
            <person name="Ouellet J.A."/>
            <person name="Stone L.S."/>
            <person name="Samson J."/>
            <person name="Smith M.J."/>
            <person name="Ask K."/>
            <person name="Ribeiro-da-Silva A."/>
            <person name="Blunck R."/>
            <person name="Poole K."/>
            <person name="Bourinet E."/>
            <person name="Sharif-Naeini R."/>
        </authorList>
    </citation>
    <scope>FUNCTION</scope>
    <scope>SUBCELLULAR LOCATION</scope>
    <scope>TISSUE SPECIFICITY</scope>
    <scope>DISRUPTION PHENOTYPE</scope>
</reference>
<reference key="6">
    <citation type="journal article" date="2021" name="Cell Rep.">
        <title>Patch-seq of mouse DRG neurons reveals candidate genes for specific mechanosensory functions.</title>
        <authorList>
            <person name="Parpaite T."/>
            <person name="Brosse L."/>
            <person name="Sejourne N."/>
            <person name="Laur A."/>
            <person name="Mechioukhi Y."/>
            <person name="Delmas P."/>
            <person name="Coste B."/>
        </authorList>
    </citation>
    <scope>FUNCTION</scope>
</reference>
<reference evidence="18 19" key="7">
    <citation type="journal article" date="2021" name="Elife">
        <title>Analysis of the mechanosensor channel functionality of TACAN.</title>
        <authorList>
            <person name="Niu Y."/>
            <person name="Tao X."/>
            <person name="Vaisey G."/>
            <person name="Olinares P.D.B."/>
            <person name="Alwaseem H."/>
            <person name="Chait B.T."/>
            <person name="MacKinnon R."/>
        </authorList>
    </citation>
    <scope>STRUCTURE BY ELECTRON MICROSCOPY (2.80 ANGSTROMS) OF WILD-TYPE AND MUTANT ALA-196/ALA-197 IN COMPLEX WITH COA</scope>
    <scope>SUBUNIT</scope>
    <scope>FUNCTION</scope>
    <scope>MUTAGENESIS OF HIS-196 AND HIS-197</scope>
</reference>
<reference key="8">
    <citation type="journal article" date="2022" name="J. Gen. Physiol.">
        <title>TMEM120A/TACAN inhibits mechanically activated PIEZO2 channels.</title>
        <authorList>
            <person name="Del Rosario J.S."/>
            <person name="Gabrielle M."/>
            <person name="Yudin Y."/>
            <person name="Rohacs T."/>
        </authorList>
    </citation>
    <scope>FUNCTION</scope>
</reference>
<reference key="9">
    <citation type="journal article" date="2022" name="Nat. Commun.">
        <title>Genomic loci mispositioning in Tmem120a knockout mice yields latent lipodystrophy.</title>
        <authorList>
            <person name="Czapiewski R."/>
            <person name="Batrakou D.G."/>
            <person name="de Las Heras J.I."/>
            <person name="Carter R.N."/>
            <person name="Sivakumar A."/>
            <person name="Sliwinska M."/>
            <person name="Dixon C.R."/>
            <person name="Webb S."/>
            <person name="Lattanzi G."/>
            <person name="Morton N.M."/>
            <person name="Schirmer E.C."/>
        </authorList>
    </citation>
    <scope>FUNCTION</scope>
    <scope>DISRUPTION PHENOTYPE</scope>
</reference>
<reference key="10">
    <citation type="journal article" date="2022" name="Nat. Commun.">
        <title>Gain-of-function genetic screening identifies the antiviral function of TMEM120A via STING activation.</title>
        <authorList>
            <person name="Li S."/>
            <person name="Qian N."/>
            <person name="Jiang C."/>
            <person name="Zu W."/>
            <person name="Liang A."/>
            <person name="Li M."/>
            <person name="Elledge S.J."/>
            <person name="Tan X."/>
        </authorList>
    </citation>
    <scope>FUNCTION</scope>
    <scope>DISRUPTION PHENOTYPE</scope>
</reference>
<reference key="11">
    <citation type="journal article" date="2024" name="Nat. Commun.">
        <title>Phosphatidic acid is an endogenous negative regulator of PIEZO2 channels and mechanical sensitivity.</title>
        <authorList>
            <person name="Gabrielle M."/>
            <person name="Yudin Y."/>
            <person name="Wang Y."/>
            <person name="Su X."/>
            <person name="Rohacs T."/>
        </authorList>
    </citation>
    <scope>FUNCTION</scope>
    <scope>SUBCELLULAR LOCATION</scope>
    <scope>MUTAGENESIS OF TRP-193; HIS-196 AND HIS-197</scope>
</reference>
<dbReference type="EMBL" id="AK028119">
    <property type="protein sequence ID" value="BAC25759.1"/>
    <property type="molecule type" value="mRNA"/>
</dbReference>
<dbReference type="EMBL" id="AK050367">
    <property type="protein sequence ID" value="BAC34212.1"/>
    <property type="molecule type" value="mRNA"/>
</dbReference>
<dbReference type="EMBL" id="BC046757">
    <property type="protein sequence ID" value="AAH46757.1"/>
    <property type="molecule type" value="mRNA"/>
</dbReference>
<dbReference type="CCDS" id="CCDS19744.1"/>
<dbReference type="RefSeq" id="NP_766129.1">
    <property type="nucleotide sequence ID" value="NM_172541.2"/>
</dbReference>
<dbReference type="PDB" id="7N0K">
    <property type="method" value="EM"/>
    <property type="resolution" value="3.50 A"/>
    <property type="chains" value="A/B=1-343"/>
</dbReference>
<dbReference type="PDB" id="7N0L">
    <property type="method" value="EM"/>
    <property type="resolution" value="2.80 A"/>
    <property type="chains" value="A/B=1-343"/>
</dbReference>
<dbReference type="PDBsum" id="7N0K"/>
<dbReference type="PDBsum" id="7N0L"/>
<dbReference type="EMDB" id="EMD-24107"/>
<dbReference type="EMDB" id="EMD-24108"/>
<dbReference type="SMR" id="Q8C1E7"/>
<dbReference type="BioGRID" id="229606">
    <property type="interactions" value="2"/>
</dbReference>
<dbReference type="FunCoup" id="Q8C1E7">
    <property type="interactions" value="610"/>
</dbReference>
<dbReference type="STRING" id="10090.ENSMUSP00000045252"/>
<dbReference type="iPTMnet" id="Q8C1E7"/>
<dbReference type="PhosphoSitePlus" id="Q8C1E7"/>
<dbReference type="SwissPalm" id="Q8C1E7"/>
<dbReference type="jPOST" id="Q8C1E7"/>
<dbReference type="PaxDb" id="10090-ENSMUSP00000045252"/>
<dbReference type="PeptideAtlas" id="Q8C1E7"/>
<dbReference type="ProteomicsDB" id="263211"/>
<dbReference type="Pumba" id="Q8C1E7"/>
<dbReference type="Antibodypedia" id="29220">
    <property type="antibodies" value="24 antibodies from 13 providers"/>
</dbReference>
<dbReference type="Ensembl" id="ENSMUST00000043378.9">
    <property type="protein sequence ID" value="ENSMUSP00000045252.3"/>
    <property type="gene ID" value="ENSMUSG00000039886.9"/>
</dbReference>
<dbReference type="GeneID" id="215210"/>
<dbReference type="KEGG" id="mmu:215210"/>
<dbReference type="UCSC" id="uc008zyu.1">
    <property type="organism name" value="mouse"/>
</dbReference>
<dbReference type="AGR" id="MGI:2686991"/>
<dbReference type="CTD" id="83862"/>
<dbReference type="MGI" id="MGI:2686991">
    <property type="gene designation" value="Tmem120a"/>
</dbReference>
<dbReference type="VEuPathDB" id="HostDB:ENSMUSG00000039886"/>
<dbReference type="eggNOG" id="KOG4758">
    <property type="taxonomic scope" value="Eukaryota"/>
</dbReference>
<dbReference type="GeneTree" id="ENSGT00390000007848"/>
<dbReference type="HOGENOM" id="CLU_048749_1_1_1"/>
<dbReference type="InParanoid" id="Q8C1E7"/>
<dbReference type="OMA" id="DRYRYKQ"/>
<dbReference type="OrthoDB" id="2015098at2759"/>
<dbReference type="PhylomeDB" id="Q8C1E7"/>
<dbReference type="TreeFam" id="TF313552"/>
<dbReference type="BioGRID-ORCS" id="215210">
    <property type="hits" value="1 hit in 77 CRISPR screens"/>
</dbReference>
<dbReference type="PRO" id="PR:Q8C1E7"/>
<dbReference type="Proteomes" id="UP000000589">
    <property type="component" value="Chromosome 5"/>
</dbReference>
<dbReference type="RNAct" id="Q8C1E7">
    <property type="molecule type" value="protein"/>
</dbReference>
<dbReference type="Bgee" id="ENSMUSG00000039886">
    <property type="expression patterns" value="Expressed in white adipose tissue and 77 other cell types or tissues"/>
</dbReference>
<dbReference type="ExpressionAtlas" id="Q8C1E7">
    <property type="expression patterns" value="baseline and differential"/>
</dbReference>
<dbReference type="GO" id="GO:0005783">
    <property type="term" value="C:endoplasmic reticulum"/>
    <property type="evidence" value="ECO:0007669"/>
    <property type="project" value="UniProtKB-SubCell"/>
</dbReference>
<dbReference type="GO" id="GO:0005637">
    <property type="term" value="C:nuclear inner membrane"/>
    <property type="evidence" value="ECO:0000314"/>
    <property type="project" value="UniProtKB"/>
</dbReference>
<dbReference type="GO" id="GO:0005886">
    <property type="term" value="C:plasma membrane"/>
    <property type="evidence" value="ECO:0000314"/>
    <property type="project" value="UniProtKB"/>
</dbReference>
<dbReference type="GO" id="GO:0120225">
    <property type="term" value="F:coenzyme A binding"/>
    <property type="evidence" value="ECO:0000314"/>
    <property type="project" value="UniProtKB"/>
</dbReference>
<dbReference type="GO" id="GO:0005216">
    <property type="term" value="F:monoatomic ion channel activity"/>
    <property type="evidence" value="ECO:0000314"/>
    <property type="project" value="UniProtKB"/>
</dbReference>
<dbReference type="GO" id="GO:0140374">
    <property type="term" value="P:antiviral innate immune response"/>
    <property type="evidence" value="ECO:0000315"/>
    <property type="project" value="UniProtKB"/>
</dbReference>
<dbReference type="GO" id="GO:0050966">
    <property type="term" value="P:detection of mechanical stimulus involved in sensory perception of pain"/>
    <property type="evidence" value="ECO:0000314"/>
    <property type="project" value="UniProtKB"/>
</dbReference>
<dbReference type="GO" id="GO:0045444">
    <property type="term" value="P:fat cell differentiation"/>
    <property type="evidence" value="ECO:0000315"/>
    <property type="project" value="UniProtKB"/>
</dbReference>
<dbReference type="GO" id="GO:0034220">
    <property type="term" value="P:monoatomic ion transmembrane transport"/>
    <property type="evidence" value="ECO:0000314"/>
    <property type="project" value="UniProtKB"/>
</dbReference>
<dbReference type="GO" id="GO:0051291">
    <property type="term" value="P:protein heterooligomerization"/>
    <property type="evidence" value="ECO:0000314"/>
    <property type="project" value="UniProtKB"/>
</dbReference>
<dbReference type="GO" id="GO:0051260">
    <property type="term" value="P:protein homooligomerization"/>
    <property type="evidence" value="ECO:0000314"/>
    <property type="project" value="UniProtKB"/>
</dbReference>
<dbReference type="InterPro" id="IPR012926">
    <property type="entry name" value="TMEM120A/B"/>
</dbReference>
<dbReference type="PANTHER" id="PTHR21433:SF1">
    <property type="entry name" value="ION CHANNEL TACAN"/>
    <property type="match status" value="1"/>
</dbReference>
<dbReference type="PANTHER" id="PTHR21433">
    <property type="entry name" value="TRANSMEMBRANE PROTEIN INDUCED BY TUMOR NECROSIS FACTOR ALPHA"/>
    <property type="match status" value="1"/>
</dbReference>
<dbReference type="Pfam" id="PF07851">
    <property type="entry name" value="TMEM120A-B"/>
    <property type="match status" value="1"/>
</dbReference>
<organism>
    <name type="scientific">Mus musculus</name>
    <name type="common">Mouse</name>
    <dbReference type="NCBI Taxonomy" id="10090"/>
    <lineage>
        <taxon>Eukaryota</taxon>
        <taxon>Metazoa</taxon>
        <taxon>Chordata</taxon>
        <taxon>Craniata</taxon>
        <taxon>Vertebrata</taxon>
        <taxon>Euteleostomi</taxon>
        <taxon>Mammalia</taxon>
        <taxon>Eutheria</taxon>
        <taxon>Euarchontoglires</taxon>
        <taxon>Glires</taxon>
        <taxon>Rodentia</taxon>
        <taxon>Myomorpha</taxon>
        <taxon>Muroidea</taxon>
        <taxon>Muridae</taxon>
        <taxon>Murinae</taxon>
        <taxon>Mus</taxon>
        <taxon>Mus</taxon>
    </lineage>
</organism>
<gene>
    <name evidence="13 17" type="primary">Tmem120a</name>
    <name evidence="12" type="synonym">Net29</name>
    <name evidence="14" type="synonym">Tacan</name>
</gene>
<sequence length="343" mass="40751">MQSPPPDPLGDCLRNWEDLQQDFQGIQETHRLYRLKLEELTKLQANCTNSITRQKKRLQELALVLKKCRPSLPSESMEAAQELENQMKERQGLFFDMEAYLPKKNGLYLSLVLGNVNVTLLSKQAKFAYKDEYEKFKLYLTIILIVISFTCRFLLNSRVTDAAFNFLLVWYYCTLTIRESILINNGSRIKGWWVFHHYVSTFLSGVMLTWPDGLMYQKFRNQFLSFSMYQSFVQFLQYYYQSGCLYRLRALGERHTMDLTVEGFQSWMWRGLTFLLPFLFFGHFWQLFNALTLFNLARDPECKEWQVLMCGFPFLLLFLGNFFTTLRVVHQKFHSQQHGNKKD</sequence>
<protein>
    <recommendedName>
        <fullName evidence="13">Transmembrane protein 120A</fullName>
    </recommendedName>
    <alternativeName>
        <fullName evidence="14">Ion channel TACAN</fullName>
    </alternativeName>
</protein>
<name>TACAN_MOUSE</name>
<evidence type="ECO:0000250" key="1">
    <source>
        <dbReference type="UniProtKB" id="Q9BXJ8"/>
    </source>
</evidence>
<evidence type="ECO:0000255" key="2"/>
<evidence type="ECO:0000269" key="3">
    <source>
    </source>
</evidence>
<evidence type="ECO:0000269" key="4">
    <source>
    </source>
</evidence>
<evidence type="ECO:0000269" key="5">
    <source>
    </source>
</evidence>
<evidence type="ECO:0000269" key="6">
    <source>
    </source>
</evidence>
<evidence type="ECO:0000269" key="7">
    <source>
    </source>
</evidence>
<evidence type="ECO:0000269" key="8">
    <source>
    </source>
</evidence>
<evidence type="ECO:0000269" key="9">
    <source>
    </source>
</evidence>
<evidence type="ECO:0000269" key="10">
    <source>
    </source>
</evidence>
<evidence type="ECO:0000269" key="11">
    <source>
    </source>
</evidence>
<evidence type="ECO:0000303" key="12">
    <source>
    </source>
</evidence>
<evidence type="ECO:0000303" key="13">
    <source>
    </source>
</evidence>
<evidence type="ECO:0000303" key="14">
    <source>
    </source>
</evidence>
<evidence type="ECO:0000305" key="15"/>
<evidence type="ECO:0000305" key="16">
    <source>
    </source>
</evidence>
<evidence type="ECO:0000312" key="17">
    <source>
        <dbReference type="MGI" id="MGI:2686991"/>
    </source>
</evidence>
<evidence type="ECO:0007744" key="18">
    <source>
        <dbReference type="PDB" id="7N0K"/>
    </source>
</evidence>
<evidence type="ECO:0007744" key="19">
    <source>
        <dbReference type="PDB" id="7N0L"/>
    </source>
</evidence>
<evidence type="ECO:0007829" key="20">
    <source>
        <dbReference type="PDB" id="7N0L"/>
    </source>
</evidence>
<comment type="function">
    <text evidence="1 4 5 6 7 9 10 11">Multifunctional protein involved in mechanosensation, and plays an essential role in lipid metabolism and adipocyte differentiation (PubMed:26024229, PubMed:32084332, PubMed:34731626, PubMed:35027552, PubMed:39147733). May function as a potential ion channel involved in sensing mechanical stimuli (By similarity). Mediates the mechanosensitivity of the PKD2-TMEM120A channel complex through direct physical interaction (By similarity). TMEM120A seems to affect mechanosensation by inhibiting PIEZO2 channels, possibly by altering cellular lipid content (PubMed:35819364, PubMed:39147733). TMEM120A is structurally similar to a lipid-modifying enzyme, ELOVL7, and contains a bound coenzyme A molecule, which suggests it might function as an enzyme in lipid metabolism (PubMed:34374644).</text>
</comment>
<comment type="subunit">
    <text evidence="1 4 6">Homodimer (PubMed:34374644). Forms heterooligomer with TMEM120B (PubMed:26024229). Interacts with PKD2; TMEM120A inhibits PKD2 channel activity through the physical association of PKD2 with TMEM120A (By similarity).</text>
</comment>
<comment type="subcellular location">
    <subcellularLocation>
        <location evidence="5 11">Cell membrane</location>
        <topology evidence="1">Multi-pass membrane protein</topology>
    </subcellularLocation>
    <subcellularLocation>
        <location evidence="3">Nucleus envelope</location>
    </subcellularLocation>
    <subcellularLocation>
        <location evidence="1">Nucleus inner membrane</location>
        <topology evidence="1">Multi-pass membrane protein</topology>
    </subcellularLocation>
    <subcellularLocation>
        <location evidence="1">Endoplasmic reticulum</location>
    </subcellularLocation>
</comment>
<comment type="tissue specificity">
    <text evidence="4 5">Widely expressed, with higher expression in the heart, kidneys, colon and sensory neurons of the dorsal root ganglia (PubMed:32084332). Expressed in nociceptors (PubMed:32084332). Highly expressed in white adipose tissue (at protein level) (PubMed:26024229). Highly expressed in brown adipose tissue and expressed at low levels in liver (PubMed:26024229).</text>
</comment>
<comment type="induction">
    <text evidence="4">Up-regulated during adipocyte differentiation.</text>
</comment>
<comment type="domain">
    <text evidence="1">The transmembrane domain (TMD) has structural homology to the very long chain fatty acid elongase 7, ELOVL7, despite low sequence homology between them.</text>
</comment>
<comment type="disruption phenotype">
    <text evidence="5 8 9">Embryonic lethality (PubMed:32084332, PubMed:35013224). Conditional knockout in nociceptors decreases the mechanosensitivity of nociceptors and reduces behavioral responses to painful mechanical stimuli but not to thermal or touch stimuli (PubMed:32084332). Adipocyte-specific knockout induces a lipodystrophy syndrome with insulin resistance and metabolic defects (PubMed:35027552). Conditional knockout in embryonic fibroblasts increases Zika infection in embryonic fibroblasts infected with Zika virus (PubMed:35013224).</text>
</comment>
<comment type="miscellaneous">
    <text evidence="14">TACAN means movement in Farsi.</text>
</comment>
<comment type="similarity">
    <text evidence="15">Belongs to the TMEM120 family.</text>
</comment>
<comment type="caution">
    <text evidence="1 6 10 15">Whether TMEM120S functions as a mechanosensitive ion channel is controversial (By similarity). Several studies show that TMEM120A does not exhibit mechanosensitive channel activity and display no typical ion channel structural characteristics (PubMed:34374644, PubMed:35819364). One publication, however, suggests the presence of a potential ion permeation pathway based on molecular dynamics simulation (By similarity). Its structural homology to ELOVL7, leads to suggest than TMEM120A may function as an enzyme involved in fatty acid metabolism, although its enzymatic activity and its potential substrates remain unknown (PubMed:34374644). Whether TMEM120A is an enzyme rather than an ion channel is still under debate.</text>
</comment>
<keyword id="KW-0002">3D-structure</keyword>
<keyword id="KW-1003">Cell membrane</keyword>
<keyword id="KW-0256">Endoplasmic reticulum</keyword>
<keyword id="KW-0407">Ion channel</keyword>
<keyword id="KW-0406">Ion transport</keyword>
<keyword id="KW-0472">Membrane</keyword>
<keyword id="KW-0539">Nucleus</keyword>
<keyword id="KW-1185">Reference proteome</keyword>
<keyword id="KW-0812">Transmembrane</keyword>
<keyword id="KW-1133">Transmembrane helix</keyword>
<keyword id="KW-0813">Transport</keyword>
<accession>Q8C1E7</accession>
<accession>Q8BWP7</accession>
<proteinExistence type="evidence at protein level"/>
<feature type="chain" id="PRO_0000309340" description="Transmembrane protein 120A">
    <location>
        <begin position="1"/>
        <end position="343"/>
    </location>
</feature>
<feature type="topological domain" description="Cytoplasmic" evidence="16">
    <location>
        <begin position="1"/>
        <end position="135"/>
    </location>
</feature>
<feature type="transmembrane region" description="Helical; Name=1" evidence="2">
    <location>
        <begin position="136"/>
        <end position="156"/>
    </location>
</feature>
<feature type="topological domain" description="Extracellular" evidence="16">
    <location>
        <begin position="157"/>
        <end position="162"/>
    </location>
</feature>
<feature type="transmembrane region" description="Helical; Name=2" evidence="2">
    <location>
        <begin position="163"/>
        <end position="183"/>
    </location>
</feature>
<feature type="topological domain" description="Cytoplasmic" evidence="16">
    <location>
        <begin position="184"/>
        <end position="190"/>
    </location>
</feature>
<feature type="transmembrane region" description="Helical; Name=3" evidence="2">
    <location>
        <begin position="191"/>
        <end position="211"/>
    </location>
</feature>
<feature type="topological domain" description="Extracellular" evidence="16">
    <location>
        <begin position="212"/>
        <end position="222"/>
    </location>
</feature>
<feature type="transmembrane region" description="Helical; Name=4" evidence="2">
    <location>
        <begin position="223"/>
        <end position="240"/>
    </location>
</feature>
<feature type="topological domain" description="Cytoplasmic" evidence="16">
    <location>
        <begin position="241"/>
        <end position="273"/>
    </location>
</feature>
<feature type="transmembrane region" description="Helical; Name=5" evidence="2">
    <location>
        <begin position="274"/>
        <end position="294"/>
    </location>
</feature>
<feature type="topological domain" description="Extracellular" evidence="16">
    <location>
        <begin position="295"/>
        <end position="305"/>
    </location>
</feature>
<feature type="transmembrane region" description="Helical; Name=6" evidence="2">
    <location>
        <begin position="306"/>
        <end position="326"/>
    </location>
</feature>
<feature type="topological domain" description="Cytoplasmic" evidence="16">
    <location>
        <begin position="327"/>
        <end position="343"/>
    </location>
</feature>
<feature type="binding site" evidence="6 19">
    <location>
        <position position="130"/>
    </location>
    <ligand>
        <name>CoA</name>
        <dbReference type="ChEBI" id="CHEBI:57287"/>
    </ligand>
</feature>
<feature type="binding site" evidence="6 19">
    <location>
        <position position="187"/>
    </location>
    <ligand>
        <name>CoA</name>
        <dbReference type="ChEBI" id="CHEBI:57287"/>
    </ligand>
</feature>
<feature type="binding site" evidence="1">
    <location>
        <position position="188"/>
    </location>
    <ligand>
        <name>CoA</name>
        <dbReference type="ChEBI" id="CHEBI:57287"/>
    </ligand>
</feature>
<feature type="binding site" evidence="1">
    <location>
        <position position="237"/>
    </location>
    <ligand>
        <name>CoA</name>
        <dbReference type="ChEBI" id="CHEBI:57287"/>
    </ligand>
</feature>
<feature type="binding site" evidence="1">
    <location>
        <position position="240"/>
    </location>
    <ligand>
        <name>CoA</name>
        <dbReference type="ChEBI" id="CHEBI:57287"/>
    </ligand>
</feature>
<feature type="binding site" evidence="6 19">
    <location>
        <position position="241"/>
    </location>
    <ligand>
        <name>CoA</name>
        <dbReference type="ChEBI" id="CHEBI:57287"/>
    </ligand>
</feature>
<feature type="binding site" evidence="6 19">
    <location>
        <position position="283"/>
    </location>
    <ligand>
        <name>CoA</name>
        <dbReference type="ChEBI" id="CHEBI:57287"/>
    </ligand>
</feature>
<feature type="binding site" evidence="6 19">
    <location>
        <position position="332"/>
    </location>
    <ligand>
        <name>CoA</name>
        <dbReference type="ChEBI" id="CHEBI:57287"/>
    </ligand>
</feature>
<feature type="mutagenesis site" description="Reduces its inhibitory effect on PIEZO2. Reduces its inhibitory effect of PIEZO2; when associated with A-196 and A-197." evidence="11">
    <original>W</original>
    <variation>A</variation>
    <location>
        <position position="193"/>
    </location>
</feature>
<feature type="mutagenesis site" description="Reduces its inhibitory effect on PIEZO2; when associated with A-193 and A-197. Shifts its ability to interact with larger CoA species (S-ethyl- CoA and acetyl-CoA); when associated with A-197." evidence="6 11">
    <original>H</original>
    <variation>A</variation>
    <location>
        <position position="196"/>
    </location>
</feature>
<feature type="mutagenesis site" description="Reduces its inhibitory effect on PIEZO2; when associated with A-193 and A-196. Shifts its ability to interact with larger CoA species (S-ethyl- CoA and acetyl-CoA); when associated with A-196." evidence="6 11">
    <original>H</original>
    <variation>A</variation>
    <location>
        <position position="197"/>
    </location>
</feature>
<feature type="helix" evidence="20">
    <location>
        <begin position="10"/>
        <end position="18"/>
    </location>
</feature>
<feature type="helix" evidence="20">
    <location>
        <begin position="23"/>
        <end position="66"/>
    </location>
</feature>
<feature type="turn" evidence="20">
    <location>
        <begin position="67"/>
        <end position="71"/>
    </location>
</feature>
<feature type="helix" evidence="20">
    <location>
        <begin position="77"/>
        <end position="81"/>
    </location>
</feature>
<feature type="helix" evidence="20">
    <location>
        <begin position="84"/>
        <end position="97"/>
    </location>
</feature>
<feature type="helix" evidence="20">
    <location>
        <begin position="107"/>
        <end position="112"/>
    </location>
</feature>
<feature type="helix" evidence="20">
    <location>
        <begin position="123"/>
        <end position="153"/>
    </location>
</feature>
<feature type="helix" evidence="20">
    <location>
        <begin position="159"/>
        <end position="184"/>
    </location>
</feature>
<feature type="helix" evidence="20">
    <location>
        <begin position="191"/>
        <end position="205"/>
    </location>
</feature>
<feature type="turn" evidence="20">
    <location>
        <begin position="206"/>
        <end position="208"/>
    </location>
</feature>
<feature type="helix" evidence="20">
    <location>
        <begin position="216"/>
        <end position="249"/>
    </location>
</feature>
<feature type="helix" evidence="20">
    <location>
        <begin position="263"/>
        <end position="271"/>
    </location>
</feature>
<feature type="turn" evidence="20">
    <location>
        <begin position="272"/>
        <end position="275"/>
    </location>
</feature>
<feature type="helix" evidence="20">
    <location>
        <begin position="276"/>
        <end position="295"/>
    </location>
</feature>
<feature type="helix" evidence="20">
    <location>
        <begin position="305"/>
        <end position="307"/>
    </location>
</feature>
<feature type="helix" evidence="20">
    <location>
        <begin position="308"/>
        <end position="311"/>
    </location>
</feature>
<feature type="helix" evidence="20">
    <location>
        <begin position="313"/>
        <end position="334"/>
    </location>
</feature>